<name>UB22B_XENLA</name>
<feature type="chain" id="PRO_0000367513" description="Ubiquitin carboxyl-terminal hydrolase 22-B">
    <location>
        <begin position="1"/>
        <end position="523"/>
    </location>
</feature>
<feature type="domain" description="USP">
    <location>
        <begin position="174"/>
        <end position="518"/>
    </location>
</feature>
<feature type="zinc finger region" description="UBP-type" evidence="3">
    <location>
        <begin position="4"/>
        <end position="121"/>
    </location>
</feature>
<feature type="active site" description="Nucleophile" evidence="4 5">
    <location>
        <position position="183"/>
    </location>
</feature>
<feature type="active site" description="Proton acceptor" evidence="4 5">
    <location>
        <position position="477"/>
    </location>
</feature>
<feature type="binding site" evidence="3">
    <location>
        <position position="6"/>
    </location>
    <ligand>
        <name>Zn(2+)</name>
        <dbReference type="ChEBI" id="CHEBI:29105"/>
        <label>1</label>
    </ligand>
</feature>
<feature type="binding site" evidence="3">
    <location>
        <position position="8"/>
    </location>
    <ligand>
        <name>Zn(2+)</name>
        <dbReference type="ChEBI" id="CHEBI:29105"/>
        <label>1</label>
    </ligand>
</feature>
<feature type="binding site" evidence="3">
    <location>
        <position position="46"/>
    </location>
    <ligand>
        <name>Zn(2+)</name>
        <dbReference type="ChEBI" id="CHEBI:29105"/>
        <label>2</label>
    </ligand>
</feature>
<feature type="binding site" evidence="3">
    <location>
        <position position="49"/>
    </location>
    <ligand>
        <name>Zn(2+)</name>
        <dbReference type="ChEBI" id="CHEBI:29105"/>
        <label>2</label>
    </ligand>
</feature>
<feature type="binding site" evidence="3">
    <location>
        <position position="59"/>
    </location>
    <ligand>
        <name>Zn(2+)</name>
        <dbReference type="ChEBI" id="CHEBI:29105"/>
        <label>3</label>
    </ligand>
</feature>
<feature type="binding site" evidence="3">
    <location>
        <position position="62"/>
    </location>
    <ligand>
        <name>Zn(2+)</name>
        <dbReference type="ChEBI" id="CHEBI:29105"/>
        <label>3</label>
    </ligand>
</feature>
<feature type="binding site" evidence="3">
    <location>
        <position position="67"/>
    </location>
    <ligand>
        <name>Zn(2+)</name>
        <dbReference type="ChEBI" id="CHEBI:29105"/>
        <label>2</label>
    </ligand>
</feature>
<feature type="binding site" evidence="3">
    <location>
        <position position="72"/>
    </location>
    <ligand>
        <name>Zn(2+)</name>
        <dbReference type="ChEBI" id="CHEBI:29105"/>
        <label>2</label>
    </ligand>
</feature>
<feature type="binding site" evidence="3">
    <location>
        <position position="76"/>
    </location>
    <ligand>
        <name>Zn(2+)</name>
        <dbReference type="ChEBI" id="CHEBI:29105"/>
        <label>3</label>
    </ligand>
</feature>
<feature type="binding site" evidence="3">
    <location>
        <position position="82"/>
    </location>
    <ligand>
        <name>Zn(2+)</name>
        <dbReference type="ChEBI" id="CHEBI:29105"/>
        <label>3</label>
    </ligand>
</feature>
<feature type="binding site" evidence="3">
    <location>
        <position position="95"/>
    </location>
    <ligand>
        <name>Zn(2+)</name>
        <dbReference type="ChEBI" id="CHEBI:29105"/>
        <label>1</label>
    </ligand>
</feature>
<feature type="binding site" evidence="3">
    <location>
        <position position="98"/>
    </location>
    <ligand>
        <name>Zn(2+)</name>
        <dbReference type="ChEBI" id="CHEBI:29105"/>
        <label>1</label>
    </ligand>
</feature>
<evidence type="ECO:0000250" key="1"/>
<evidence type="ECO:0000250" key="2">
    <source>
        <dbReference type="UniProtKB" id="Q5DU02"/>
    </source>
</evidence>
<evidence type="ECO:0000255" key="3">
    <source>
        <dbReference type="PROSITE-ProRule" id="PRU00502"/>
    </source>
</evidence>
<evidence type="ECO:0000255" key="4">
    <source>
        <dbReference type="PROSITE-ProRule" id="PRU10092"/>
    </source>
</evidence>
<evidence type="ECO:0000255" key="5">
    <source>
        <dbReference type="PROSITE-ProRule" id="PRU10093"/>
    </source>
</evidence>
<evidence type="ECO:0000305" key="6"/>
<proteinExistence type="evidence at transcript level"/>
<gene>
    <name type="primary">usp22-b</name>
</gene>
<dbReference type="EC" id="3.4.19.12"/>
<dbReference type="EMBL" id="BC078033">
    <property type="protein sequence ID" value="AAH78033.1"/>
    <property type="status" value="ALT_INIT"/>
    <property type="molecule type" value="mRNA"/>
</dbReference>
<dbReference type="RefSeq" id="NP_001090240.1">
    <property type="nucleotide sequence ID" value="NM_001096771.1"/>
</dbReference>
<dbReference type="SMR" id="Q6DCJ1"/>
<dbReference type="DNASU" id="779144"/>
<dbReference type="GeneID" id="779144"/>
<dbReference type="KEGG" id="xla:779144"/>
<dbReference type="AGR" id="Xenbase:XB-GENE-6086104"/>
<dbReference type="CTD" id="779144"/>
<dbReference type="Xenbase" id="XB-GENE-6086104">
    <property type="gene designation" value="usp22.S"/>
</dbReference>
<dbReference type="OrthoDB" id="47475at2759"/>
<dbReference type="Proteomes" id="UP000186698">
    <property type="component" value="Chromosome 9_10S"/>
</dbReference>
<dbReference type="Bgee" id="779144">
    <property type="expression patterns" value="Expressed in blastula and 19 other cell types or tissues"/>
</dbReference>
<dbReference type="GO" id="GO:0005634">
    <property type="term" value="C:nucleus"/>
    <property type="evidence" value="ECO:0007669"/>
    <property type="project" value="UniProtKB-SubCell"/>
</dbReference>
<dbReference type="GO" id="GO:0004843">
    <property type="term" value="F:cysteine-type deubiquitinase activity"/>
    <property type="evidence" value="ECO:0007669"/>
    <property type="project" value="UniProtKB-EC"/>
</dbReference>
<dbReference type="GO" id="GO:0008270">
    <property type="term" value="F:zinc ion binding"/>
    <property type="evidence" value="ECO:0007669"/>
    <property type="project" value="UniProtKB-KW"/>
</dbReference>
<dbReference type="GO" id="GO:0006325">
    <property type="term" value="P:chromatin organization"/>
    <property type="evidence" value="ECO:0007669"/>
    <property type="project" value="UniProtKB-KW"/>
</dbReference>
<dbReference type="GO" id="GO:0016579">
    <property type="term" value="P:protein deubiquitination"/>
    <property type="evidence" value="ECO:0007669"/>
    <property type="project" value="InterPro"/>
</dbReference>
<dbReference type="GO" id="GO:0006508">
    <property type="term" value="P:proteolysis"/>
    <property type="evidence" value="ECO:0007669"/>
    <property type="project" value="UniProtKB-KW"/>
</dbReference>
<dbReference type="CDD" id="cd02660">
    <property type="entry name" value="Peptidase_C19D"/>
    <property type="match status" value="1"/>
</dbReference>
<dbReference type="FunFam" id="3.30.40.10:FF:000141">
    <property type="entry name" value="Ubiquitinyl hydrolase 1"/>
    <property type="match status" value="1"/>
</dbReference>
<dbReference type="FunFam" id="3.90.70.10:FF:000011">
    <property type="entry name" value="Ubiquitinyl hydrolase 1"/>
    <property type="match status" value="1"/>
</dbReference>
<dbReference type="Gene3D" id="3.90.70.10">
    <property type="entry name" value="Cysteine proteinases"/>
    <property type="match status" value="1"/>
</dbReference>
<dbReference type="Gene3D" id="3.30.40.10">
    <property type="entry name" value="Zinc/RING finger domain, C3HC4 (zinc finger)"/>
    <property type="match status" value="1"/>
</dbReference>
<dbReference type="InterPro" id="IPR038765">
    <property type="entry name" value="Papain-like_cys_pep_sf"/>
</dbReference>
<dbReference type="InterPro" id="IPR001394">
    <property type="entry name" value="Peptidase_C19_UCH"/>
</dbReference>
<dbReference type="InterPro" id="IPR050185">
    <property type="entry name" value="Ub_carboxyl-term_hydrolase"/>
</dbReference>
<dbReference type="InterPro" id="IPR018200">
    <property type="entry name" value="USP_CS"/>
</dbReference>
<dbReference type="InterPro" id="IPR028889">
    <property type="entry name" value="USP_dom"/>
</dbReference>
<dbReference type="InterPro" id="IPR013083">
    <property type="entry name" value="Znf_RING/FYVE/PHD"/>
</dbReference>
<dbReference type="InterPro" id="IPR001607">
    <property type="entry name" value="Znf_UBP"/>
</dbReference>
<dbReference type="PANTHER" id="PTHR21646">
    <property type="entry name" value="UBIQUITIN CARBOXYL-TERMINAL HYDROLASE"/>
    <property type="match status" value="1"/>
</dbReference>
<dbReference type="PANTHER" id="PTHR21646:SF33">
    <property type="entry name" value="UBIQUITIN CARBOXYL-TERMINAL HYDROLASE 22"/>
    <property type="match status" value="1"/>
</dbReference>
<dbReference type="Pfam" id="PF00443">
    <property type="entry name" value="UCH"/>
    <property type="match status" value="1"/>
</dbReference>
<dbReference type="Pfam" id="PF02148">
    <property type="entry name" value="zf-UBP"/>
    <property type="match status" value="1"/>
</dbReference>
<dbReference type="SUPFAM" id="SSF54001">
    <property type="entry name" value="Cysteine proteinases"/>
    <property type="match status" value="1"/>
</dbReference>
<dbReference type="SUPFAM" id="SSF57850">
    <property type="entry name" value="RING/U-box"/>
    <property type="match status" value="1"/>
</dbReference>
<dbReference type="PROSITE" id="PS00972">
    <property type="entry name" value="USP_1"/>
    <property type="match status" value="1"/>
</dbReference>
<dbReference type="PROSITE" id="PS00973">
    <property type="entry name" value="USP_2"/>
    <property type="match status" value="1"/>
</dbReference>
<dbReference type="PROSITE" id="PS50235">
    <property type="entry name" value="USP_3"/>
    <property type="match status" value="1"/>
</dbReference>
<dbReference type="PROSITE" id="PS50271">
    <property type="entry name" value="ZF_UBP"/>
    <property type="match status" value="1"/>
</dbReference>
<protein>
    <recommendedName>
        <fullName>Ubiquitin carboxyl-terminal hydrolase 22-B</fullName>
        <ecNumber>3.4.19.12</ecNumber>
    </recommendedName>
    <alternativeName>
        <fullName>Deubiquitinating enzyme 22-B</fullName>
    </alternativeName>
    <alternativeName>
        <fullName>Ubiquitin thioesterase 22-B</fullName>
    </alternativeName>
    <alternativeName>
        <fullName>Ubiquitin-specific-processing protease 22-B</fullName>
    </alternativeName>
</protein>
<comment type="function">
    <text evidence="1">Histone deubiquitinating component of the transcription regulatory histone acetylation (HAT) complex SAGA. Catalyzes the deubiquitination of both histones H2A and H2B, thereby acting as a coactivator. Recruited to specific gene promoters by activators, where it is required for transcription (By similarity).</text>
</comment>
<comment type="catalytic activity">
    <reaction>
        <text>Thiol-dependent hydrolysis of ester, thioester, amide, peptide and isopeptide bonds formed by the C-terminal Gly of ubiquitin (a 76-residue protein attached to proteins as an intracellular targeting signal).</text>
        <dbReference type="EC" id="3.4.19.12"/>
    </reaction>
</comment>
<comment type="subunit">
    <text evidence="1">Component of some SAGA transcription coactivator-HAT complexes.</text>
</comment>
<comment type="subcellular location">
    <subcellularLocation>
        <location evidence="2">Nucleus</location>
    </subcellularLocation>
</comment>
<comment type="similarity">
    <text evidence="6">Belongs to the peptidase C19 family. UBP8 subfamily.</text>
</comment>
<comment type="sequence caution" evidence="6">
    <conflict type="erroneous initiation">
        <sequence resource="EMBL-CDS" id="AAH78033"/>
    </conflict>
</comment>
<organism>
    <name type="scientific">Xenopus laevis</name>
    <name type="common">African clawed frog</name>
    <dbReference type="NCBI Taxonomy" id="8355"/>
    <lineage>
        <taxon>Eukaryota</taxon>
        <taxon>Metazoa</taxon>
        <taxon>Chordata</taxon>
        <taxon>Craniata</taxon>
        <taxon>Vertebrata</taxon>
        <taxon>Euteleostomi</taxon>
        <taxon>Amphibia</taxon>
        <taxon>Batrachia</taxon>
        <taxon>Anura</taxon>
        <taxon>Pipoidea</taxon>
        <taxon>Pipidae</taxon>
        <taxon>Xenopodinae</taxon>
        <taxon>Xenopus</taxon>
        <taxon>Xenopus</taxon>
    </lineage>
</organism>
<sequence length="523" mass="60109">MSPAGCSHVNSFKVENWRQNLRVIYQCFVWSGTPETRKRKAKSCVCHMCGAHLNRLHSCLYCVYFGCFTKKHIHEHAKNKRHNLAIDLLYGGIYCFMCQDYIYDKDMEQVAKEEQRKAWKLQVFSPALVSPYQYTMTGVGEKYSTWEPTKRELELLQHNPKRRKITTNCTIGLRGLINLGNTCFMNCIVQALTHTPLLRDFFLSDRHKCEMQSPNSCLVCEMSTLFQEFYSGHRSPHIPYRLLHLVWTHARHLAGYEQQDAHEFLIAALDVLHRHCKGDDNGKKANNPNHCNCIIDQIFTGGLQSDVTCQVCHGVSTTIDPFWDISLDLPGSSTPFWPLSPGSDAGVVNGESHVSGTTTLTDCLRRFTRPEHLGSSAKIKCSGCHSYQESTKQLTMKKLPIVACFHLKRFEHSAKLRRKITTYVSFPLELDMMPFMASSKESRMNGQYQQPSDSLHNDNKYSLFAVVNHQGTLESGHYTSFIRQHKDQWFKCDDAIITKASIKDVIDSEGYLLFYHKQFLEYE</sequence>
<reference key="1">
    <citation type="submission" date="2004-07" db="EMBL/GenBank/DDBJ databases">
        <authorList>
            <consortium name="NIH - Xenopus Gene Collection (XGC) project"/>
        </authorList>
    </citation>
    <scope>NUCLEOTIDE SEQUENCE [LARGE SCALE MRNA]</scope>
    <source>
        <tissue>Embryo</tissue>
    </source>
</reference>
<accession>Q6DCJ1</accession>
<keyword id="KW-0010">Activator</keyword>
<keyword id="KW-0131">Cell cycle</keyword>
<keyword id="KW-0156">Chromatin regulator</keyword>
<keyword id="KW-0378">Hydrolase</keyword>
<keyword id="KW-0479">Metal-binding</keyword>
<keyword id="KW-0539">Nucleus</keyword>
<keyword id="KW-0645">Protease</keyword>
<keyword id="KW-1185">Reference proteome</keyword>
<keyword id="KW-0788">Thiol protease</keyword>
<keyword id="KW-0804">Transcription</keyword>
<keyword id="KW-0805">Transcription regulation</keyword>
<keyword id="KW-0833">Ubl conjugation pathway</keyword>
<keyword id="KW-0862">Zinc</keyword>
<keyword id="KW-0863">Zinc-finger</keyword>